<comment type="similarity">
    <text evidence="1">To M.tuberculosis Rv1271c.</text>
</comment>
<name>Y1323_MYCBO</name>
<feature type="chain" id="PRO_0000103792" description="Uncharacterized protein Mb1323c">
    <location>
        <begin position="1"/>
        <end position="111"/>
    </location>
</feature>
<organism>
    <name type="scientific">Mycobacterium bovis (strain ATCC BAA-935 / AF2122/97)</name>
    <dbReference type="NCBI Taxonomy" id="233413"/>
    <lineage>
        <taxon>Bacteria</taxon>
        <taxon>Bacillati</taxon>
        <taxon>Actinomycetota</taxon>
        <taxon>Actinomycetes</taxon>
        <taxon>Mycobacteriales</taxon>
        <taxon>Mycobacteriaceae</taxon>
        <taxon>Mycobacterium</taxon>
        <taxon>Mycobacterium tuberculosis complex</taxon>
    </lineage>
</organism>
<keyword id="KW-1185">Reference proteome</keyword>
<accession>P0A5E6</accession>
<accession>A0A1R3XXX6</accession>
<accession>Q10617</accession>
<accession>X2BHW7</accession>
<evidence type="ECO:0000305" key="1"/>
<dbReference type="EMBL" id="LT708304">
    <property type="protein sequence ID" value="SIT99926.1"/>
    <property type="molecule type" value="Genomic_DNA"/>
</dbReference>
<dbReference type="RefSeq" id="NP_854977.1">
    <property type="nucleotide sequence ID" value="NC_002945.3"/>
</dbReference>
<dbReference type="RefSeq" id="WP_003406629.1">
    <property type="nucleotide sequence ID" value="NC_002945.4"/>
</dbReference>
<dbReference type="KEGG" id="mbo:BQ2027_MB1323C"/>
<dbReference type="PATRIC" id="fig|233413.5.peg.1449"/>
<dbReference type="Proteomes" id="UP000001419">
    <property type="component" value="Chromosome"/>
</dbReference>
<dbReference type="InterPro" id="IPR007969">
    <property type="entry name" value="DUF732"/>
</dbReference>
<dbReference type="Pfam" id="PF05305">
    <property type="entry name" value="DUF732"/>
    <property type="match status" value="1"/>
</dbReference>
<protein>
    <recommendedName>
        <fullName>Uncharacterized protein Mb1323c</fullName>
    </recommendedName>
</protein>
<sequence length="111" mass="11025">MFTRRFAASMVGTTLTAATLGLAALGFAGTASASSTDEAFLAQLQADGITPPSAARAIKDAHAVCDALDEGHSAKAVIKAVAKATGLSAKGAKTFAVDAASAYCPQYVTSS</sequence>
<proteinExistence type="predicted"/>
<gene>
    <name type="ordered locus">BQ2027_MB1323C</name>
</gene>
<reference key="1">
    <citation type="journal article" date="2003" name="Proc. Natl. Acad. Sci. U.S.A.">
        <title>The complete genome sequence of Mycobacterium bovis.</title>
        <authorList>
            <person name="Garnier T."/>
            <person name="Eiglmeier K."/>
            <person name="Camus J.-C."/>
            <person name="Medina N."/>
            <person name="Mansoor H."/>
            <person name="Pryor M."/>
            <person name="Duthoy S."/>
            <person name="Grondin S."/>
            <person name="Lacroix C."/>
            <person name="Monsempe C."/>
            <person name="Simon S."/>
            <person name="Harris B."/>
            <person name="Atkin R."/>
            <person name="Doggett J."/>
            <person name="Mayes R."/>
            <person name="Keating L."/>
            <person name="Wheeler P.R."/>
            <person name="Parkhill J."/>
            <person name="Barrell B.G."/>
            <person name="Cole S.T."/>
            <person name="Gordon S.V."/>
            <person name="Hewinson R.G."/>
        </authorList>
    </citation>
    <scope>NUCLEOTIDE SEQUENCE [LARGE SCALE GENOMIC DNA]</scope>
    <source>
        <strain>ATCC BAA-935 / AF2122/97</strain>
    </source>
</reference>
<reference key="2">
    <citation type="journal article" date="2017" name="Genome Announc.">
        <title>Updated reference genome sequence and annotation of Mycobacterium bovis AF2122/97.</title>
        <authorList>
            <person name="Malone K.M."/>
            <person name="Farrell D."/>
            <person name="Stuber T.P."/>
            <person name="Schubert O.T."/>
            <person name="Aebersold R."/>
            <person name="Robbe-Austerman S."/>
            <person name="Gordon S.V."/>
        </authorList>
    </citation>
    <scope>NUCLEOTIDE SEQUENCE [LARGE SCALE GENOMIC DNA]</scope>
    <scope>GENOME REANNOTATION</scope>
    <source>
        <strain>ATCC BAA-935 / AF2122/97</strain>
    </source>
</reference>